<comment type="function">
    <text evidence="1">One of the primary rRNA binding proteins, it binds specifically to the 5'-end of 16S ribosomal RNA.</text>
</comment>
<comment type="subunit">
    <text evidence="1">Part of the 30S ribosomal subunit.</text>
</comment>
<comment type="similarity">
    <text evidence="1">Belongs to the universal ribosomal protein uS17 family.</text>
</comment>
<proteinExistence type="inferred from homology"/>
<sequence length="84" mass="9570">MTDKIRTVQGKVVSDKMDKSFVVAIERTVKHPLYGKFIRRTTKLHVHDENNEAKLGDVVEIKECRPVSKTKSHTLVRVVEKAVA</sequence>
<organism>
    <name type="scientific">Actinobacillus pleuropneumoniae serotype 5b (strain L20)</name>
    <dbReference type="NCBI Taxonomy" id="416269"/>
    <lineage>
        <taxon>Bacteria</taxon>
        <taxon>Pseudomonadati</taxon>
        <taxon>Pseudomonadota</taxon>
        <taxon>Gammaproteobacteria</taxon>
        <taxon>Pasteurellales</taxon>
        <taxon>Pasteurellaceae</taxon>
        <taxon>Actinobacillus</taxon>
    </lineage>
</organism>
<dbReference type="EMBL" id="CP000569">
    <property type="protein sequence ID" value="ABN74853.1"/>
    <property type="molecule type" value="Genomic_DNA"/>
</dbReference>
<dbReference type="RefSeq" id="WP_005599296.1">
    <property type="nucleotide sequence ID" value="NC_009053.1"/>
</dbReference>
<dbReference type="SMR" id="A3N367"/>
<dbReference type="STRING" id="416269.APL_1769"/>
<dbReference type="EnsemblBacteria" id="ABN74853">
    <property type="protein sequence ID" value="ABN74853"/>
    <property type="gene ID" value="APL_1769"/>
</dbReference>
<dbReference type="GeneID" id="48600061"/>
<dbReference type="KEGG" id="apl:APL_1769"/>
<dbReference type="eggNOG" id="COG0186">
    <property type="taxonomic scope" value="Bacteria"/>
</dbReference>
<dbReference type="HOGENOM" id="CLU_073626_1_1_6"/>
<dbReference type="Proteomes" id="UP000001432">
    <property type="component" value="Chromosome"/>
</dbReference>
<dbReference type="GO" id="GO:0022627">
    <property type="term" value="C:cytosolic small ribosomal subunit"/>
    <property type="evidence" value="ECO:0007669"/>
    <property type="project" value="TreeGrafter"/>
</dbReference>
<dbReference type="GO" id="GO:0019843">
    <property type="term" value="F:rRNA binding"/>
    <property type="evidence" value="ECO:0007669"/>
    <property type="project" value="UniProtKB-UniRule"/>
</dbReference>
<dbReference type="GO" id="GO:0003735">
    <property type="term" value="F:structural constituent of ribosome"/>
    <property type="evidence" value="ECO:0007669"/>
    <property type="project" value="InterPro"/>
</dbReference>
<dbReference type="GO" id="GO:0006412">
    <property type="term" value="P:translation"/>
    <property type="evidence" value="ECO:0007669"/>
    <property type="project" value="UniProtKB-UniRule"/>
</dbReference>
<dbReference type="CDD" id="cd00364">
    <property type="entry name" value="Ribosomal_uS17"/>
    <property type="match status" value="1"/>
</dbReference>
<dbReference type="FunFam" id="2.40.50.140:FF:000014">
    <property type="entry name" value="30S ribosomal protein S17"/>
    <property type="match status" value="1"/>
</dbReference>
<dbReference type="Gene3D" id="2.40.50.140">
    <property type="entry name" value="Nucleic acid-binding proteins"/>
    <property type="match status" value="1"/>
</dbReference>
<dbReference type="HAMAP" id="MF_01345_B">
    <property type="entry name" value="Ribosomal_uS17_B"/>
    <property type="match status" value="1"/>
</dbReference>
<dbReference type="InterPro" id="IPR012340">
    <property type="entry name" value="NA-bd_OB-fold"/>
</dbReference>
<dbReference type="InterPro" id="IPR000266">
    <property type="entry name" value="Ribosomal_uS17"/>
</dbReference>
<dbReference type="InterPro" id="IPR019984">
    <property type="entry name" value="Ribosomal_uS17_bact/chlr"/>
</dbReference>
<dbReference type="InterPro" id="IPR019979">
    <property type="entry name" value="Ribosomal_uS17_CS"/>
</dbReference>
<dbReference type="NCBIfam" id="NF004123">
    <property type="entry name" value="PRK05610.1"/>
    <property type="match status" value="1"/>
</dbReference>
<dbReference type="NCBIfam" id="TIGR03635">
    <property type="entry name" value="uS17_bact"/>
    <property type="match status" value="1"/>
</dbReference>
<dbReference type="PANTHER" id="PTHR10744">
    <property type="entry name" value="40S RIBOSOMAL PROTEIN S11 FAMILY MEMBER"/>
    <property type="match status" value="1"/>
</dbReference>
<dbReference type="PANTHER" id="PTHR10744:SF1">
    <property type="entry name" value="SMALL RIBOSOMAL SUBUNIT PROTEIN US17M"/>
    <property type="match status" value="1"/>
</dbReference>
<dbReference type="Pfam" id="PF00366">
    <property type="entry name" value="Ribosomal_S17"/>
    <property type="match status" value="1"/>
</dbReference>
<dbReference type="PRINTS" id="PR00973">
    <property type="entry name" value="RIBOSOMALS17"/>
</dbReference>
<dbReference type="SUPFAM" id="SSF50249">
    <property type="entry name" value="Nucleic acid-binding proteins"/>
    <property type="match status" value="1"/>
</dbReference>
<dbReference type="PROSITE" id="PS00056">
    <property type="entry name" value="RIBOSOMAL_S17"/>
    <property type="match status" value="1"/>
</dbReference>
<name>RS17_ACTP2</name>
<reference key="1">
    <citation type="journal article" date="2008" name="J. Bacteriol.">
        <title>The complete genome sequence of Actinobacillus pleuropneumoniae L20 (serotype 5b).</title>
        <authorList>
            <person name="Foote S.J."/>
            <person name="Bosse J.T."/>
            <person name="Bouevitch A.B."/>
            <person name="Langford P.R."/>
            <person name="Young N.M."/>
            <person name="Nash J.H.E."/>
        </authorList>
    </citation>
    <scope>NUCLEOTIDE SEQUENCE [LARGE SCALE GENOMIC DNA]</scope>
    <source>
        <strain>L20</strain>
    </source>
</reference>
<feature type="chain" id="PRO_1000054909" description="Small ribosomal subunit protein uS17">
    <location>
        <begin position="1"/>
        <end position="84"/>
    </location>
</feature>
<evidence type="ECO:0000255" key="1">
    <source>
        <dbReference type="HAMAP-Rule" id="MF_01345"/>
    </source>
</evidence>
<evidence type="ECO:0000305" key="2"/>
<gene>
    <name evidence="1" type="primary">rpsQ</name>
    <name type="ordered locus">APL_1769</name>
</gene>
<keyword id="KW-1185">Reference proteome</keyword>
<keyword id="KW-0687">Ribonucleoprotein</keyword>
<keyword id="KW-0689">Ribosomal protein</keyword>
<keyword id="KW-0694">RNA-binding</keyword>
<keyword id="KW-0699">rRNA-binding</keyword>
<accession>A3N367</accession>
<protein>
    <recommendedName>
        <fullName evidence="1">Small ribosomal subunit protein uS17</fullName>
    </recommendedName>
    <alternativeName>
        <fullName evidence="2">30S ribosomal protein S17</fullName>
    </alternativeName>
</protein>